<sequence length="183" mass="20263">MIIPKKNRNEICKYLFQEGVLYAKKDYNLAKHPQIDVPNLQVIKLMQSFKSKEYVRETFSWQYYYWYLTNDGIEHLRNYLNLPSEIVPATLKKSARPPGRPFGSGPPGDRPRGPPRFEGDRPRFGDRDGYRGGPRGAPGDFGGEKGGAPAEFQPSFRSSGGRPGFGRGGGGGFGAGPTSSSME</sequence>
<reference key="1">
    <citation type="journal article" date="2005" name="Nature">
        <title>The map-based sequence of the rice genome.</title>
        <authorList>
            <consortium name="International rice genome sequencing project (IRGSP)"/>
        </authorList>
    </citation>
    <scope>NUCLEOTIDE SEQUENCE [LARGE SCALE GENOMIC DNA]</scope>
    <source>
        <strain>cv. Nipponbare</strain>
    </source>
</reference>
<reference key="2">
    <citation type="journal article" date="2008" name="Nucleic Acids Res.">
        <title>The rice annotation project database (RAP-DB): 2008 update.</title>
        <authorList>
            <consortium name="The rice annotation project (RAP)"/>
        </authorList>
    </citation>
    <scope>GENOME REANNOTATION</scope>
    <source>
        <strain>cv. Nipponbare</strain>
    </source>
</reference>
<reference key="3">
    <citation type="journal article" date="2013" name="Rice">
        <title>Improvement of the Oryza sativa Nipponbare reference genome using next generation sequence and optical map data.</title>
        <authorList>
            <person name="Kawahara Y."/>
            <person name="de la Bastide M."/>
            <person name="Hamilton J.P."/>
            <person name="Kanamori H."/>
            <person name="McCombie W.R."/>
            <person name="Ouyang S."/>
            <person name="Schwartz D.C."/>
            <person name="Tanaka T."/>
            <person name="Wu J."/>
            <person name="Zhou S."/>
            <person name="Childs K.L."/>
            <person name="Davidson R.M."/>
            <person name="Lin H."/>
            <person name="Quesada-Ocampo L."/>
            <person name="Vaillancourt B."/>
            <person name="Sakai H."/>
            <person name="Lee S.S."/>
            <person name="Kim J."/>
            <person name="Numa H."/>
            <person name="Itoh T."/>
            <person name="Buell C.R."/>
            <person name="Matsumoto T."/>
        </authorList>
    </citation>
    <scope>GENOME REANNOTATION</scope>
    <source>
        <strain>cv. Nipponbare</strain>
    </source>
</reference>
<reference key="4">
    <citation type="journal article" date="2005" name="PLoS Biol.">
        <title>The genomes of Oryza sativa: a history of duplications.</title>
        <authorList>
            <person name="Yu J."/>
            <person name="Wang J."/>
            <person name="Lin W."/>
            <person name="Li S."/>
            <person name="Li H."/>
            <person name="Zhou J."/>
            <person name="Ni P."/>
            <person name="Dong W."/>
            <person name="Hu S."/>
            <person name="Zeng C."/>
            <person name="Zhang J."/>
            <person name="Zhang Y."/>
            <person name="Li R."/>
            <person name="Xu Z."/>
            <person name="Li S."/>
            <person name="Li X."/>
            <person name="Zheng H."/>
            <person name="Cong L."/>
            <person name="Lin L."/>
            <person name="Yin J."/>
            <person name="Geng J."/>
            <person name="Li G."/>
            <person name="Shi J."/>
            <person name="Liu J."/>
            <person name="Lv H."/>
            <person name="Li J."/>
            <person name="Wang J."/>
            <person name="Deng Y."/>
            <person name="Ran L."/>
            <person name="Shi X."/>
            <person name="Wang X."/>
            <person name="Wu Q."/>
            <person name="Li C."/>
            <person name="Ren X."/>
            <person name="Wang J."/>
            <person name="Wang X."/>
            <person name="Li D."/>
            <person name="Liu D."/>
            <person name="Zhang X."/>
            <person name="Ji Z."/>
            <person name="Zhao W."/>
            <person name="Sun Y."/>
            <person name="Zhang Z."/>
            <person name="Bao J."/>
            <person name="Han Y."/>
            <person name="Dong L."/>
            <person name="Ji J."/>
            <person name="Chen P."/>
            <person name="Wu S."/>
            <person name="Liu J."/>
            <person name="Xiao Y."/>
            <person name="Bu D."/>
            <person name="Tan J."/>
            <person name="Yang L."/>
            <person name="Ye C."/>
            <person name="Zhang J."/>
            <person name="Xu J."/>
            <person name="Zhou Y."/>
            <person name="Yu Y."/>
            <person name="Zhang B."/>
            <person name="Zhuang S."/>
            <person name="Wei H."/>
            <person name="Liu B."/>
            <person name="Lei M."/>
            <person name="Yu H."/>
            <person name="Li Y."/>
            <person name="Xu H."/>
            <person name="Wei S."/>
            <person name="He X."/>
            <person name="Fang L."/>
            <person name="Zhang Z."/>
            <person name="Zhang Y."/>
            <person name="Huang X."/>
            <person name="Su Z."/>
            <person name="Tong W."/>
            <person name="Li J."/>
            <person name="Tong Z."/>
            <person name="Li S."/>
            <person name="Ye J."/>
            <person name="Wang L."/>
            <person name="Fang L."/>
            <person name="Lei T."/>
            <person name="Chen C.-S."/>
            <person name="Chen H.-C."/>
            <person name="Xu Z."/>
            <person name="Li H."/>
            <person name="Huang H."/>
            <person name="Zhang F."/>
            <person name="Xu H."/>
            <person name="Li N."/>
            <person name="Zhao C."/>
            <person name="Li S."/>
            <person name="Dong L."/>
            <person name="Huang Y."/>
            <person name="Li L."/>
            <person name="Xi Y."/>
            <person name="Qi Q."/>
            <person name="Li W."/>
            <person name="Zhang B."/>
            <person name="Hu W."/>
            <person name="Zhang Y."/>
            <person name="Tian X."/>
            <person name="Jiao Y."/>
            <person name="Liang X."/>
            <person name="Jin J."/>
            <person name="Gao L."/>
            <person name="Zheng W."/>
            <person name="Hao B."/>
            <person name="Liu S.-M."/>
            <person name="Wang W."/>
            <person name="Yuan L."/>
            <person name="Cao M."/>
            <person name="McDermott J."/>
            <person name="Samudrala R."/>
            <person name="Wang J."/>
            <person name="Wong G.K.-S."/>
            <person name="Yang H."/>
        </authorList>
    </citation>
    <scope>NUCLEOTIDE SEQUENCE [LARGE SCALE GENOMIC DNA]</scope>
    <source>
        <strain>cv. Nipponbare</strain>
    </source>
</reference>
<reference key="5">
    <citation type="journal article" date="2003" name="Science">
        <title>Collection, mapping, and annotation of over 28,000 cDNA clones from japonica rice.</title>
        <authorList>
            <consortium name="The rice full-length cDNA consortium"/>
        </authorList>
    </citation>
    <scope>NUCLEOTIDE SEQUENCE [LARGE SCALE MRNA]</scope>
    <source>
        <strain>cv. Nipponbare</strain>
    </source>
</reference>
<organism>
    <name type="scientific">Oryza sativa subsp. japonica</name>
    <name type="common">Rice</name>
    <dbReference type="NCBI Taxonomy" id="39947"/>
    <lineage>
        <taxon>Eukaryota</taxon>
        <taxon>Viridiplantae</taxon>
        <taxon>Streptophyta</taxon>
        <taxon>Embryophyta</taxon>
        <taxon>Tracheophyta</taxon>
        <taxon>Spermatophyta</taxon>
        <taxon>Magnoliopsida</taxon>
        <taxon>Liliopsida</taxon>
        <taxon>Poales</taxon>
        <taxon>Poaceae</taxon>
        <taxon>BOP clade</taxon>
        <taxon>Oryzoideae</taxon>
        <taxon>Oryzeae</taxon>
        <taxon>Oryzinae</taxon>
        <taxon>Oryza</taxon>
        <taxon>Oryza sativa</taxon>
    </lineage>
</organism>
<gene>
    <name evidence="3" type="primary">RPS10-1</name>
    <name evidence="6" type="ordered locus">Os02g0549600</name>
    <name evidence="3" type="ordered locus">LOC_Os02g34460</name>
    <name evidence="7" type="ORF">OsJ_07087</name>
    <name evidence="4" type="ORF">OSJNBa0040I22.20</name>
    <name evidence="5" type="ORF">P0451A10.8</name>
</gene>
<dbReference type="EMBL" id="AP004775">
    <property type="protein sequence ID" value="BAD33256.1"/>
    <property type="molecule type" value="Genomic_DNA"/>
</dbReference>
<dbReference type="EMBL" id="AP005469">
    <property type="protein sequence ID" value="BAD16194.1"/>
    <property type="molecule type" value="Genomic_DNA"/>
</dbReference>
<dbReference type="EMBL" id="AP008208">
    <property type="protein sequence ID" value="BAF09002.1"/>
    <property type="molecule type" value="Genomic_DNA"/>
</dbReference>
<dbReference type="EMBL" id="AP014958">
    <property type="protein sequence ID" value="BAS79148.1"/>
    <property type="molecule type" value="Genomic_DNA"/>
</dbReference>
<dbReference type="EMBL" id="CM000139">
    <property type="protein sequence ID" value="EAZ23393.1"/>
    <property type="molecule type" value="Genomic_DNA"/>
</dbReference>
<dbReference type="EMBL" id="AK066564">
    <property type="protein sequence ID" value="BAG90032.1"/>
    <property type="molecule type" value="mRNA"/>
</dbReference>
<dbReference type="RefSeq" id="XP_015623121.1">
    <property type="nucleotide sequence ID" value="XM_015767635.1"/>
</dbReference>
<dbReference type="RefSeq" id="XP_015636412.1">
    <property type="nucleotide sequence ID" value="XM_015780926.1"/>
</dbReference>
<dbReference type="SMR" id="P0DKK8"/>
<dbReference type="FunCoup" id="P0DKK8">
    <property type="interactions" value="2738"/>
</dbReference>
<dbReference type="STRING" id="39947.P0DKK8"/>
<dbReference type="PaxDb" id="39947-P0DKK8"/>
<dbReference type="EnsemblPlants" id="Os02t0549600-01">
    <property type="protein sequence ID" value="Os02t0549600-01"/>
    <property type="gene ID" value="Os02g0549600"/>
</dbReference>
<dbReference type="EnsemblPlants" id="Os04t0430100-01">
    <property type="protein sequence ID" value="Os04t0430100-01"/>
    <property type="gene ID" value="Os04g0430100"/>
</dbReference>
<dbReference type="Gramene" id="Os02t0549600-01">
    <property type="protein sequence ID" value="Os02t0549600-01"/>
    <property type="gene ID" value="Os02g0549600"/>
</dbReference>
<dbReference type="Gramene" id="Os04t0430100-01">
    <property type="protein sequence ID" value="Os04t0430100-01"/>
    <property type="gene ID" value="Os04g0430100"/>
</dbReference>
<dbReference type="KEGG" id="dosa:Os02g0549600"/>
<dbReference type="eggNOG" id="KOG3344">
    <property type="taxonomic scope" value="Eukaryota"/>
</dbReference>
<dbReference type="InParanoid" id="P0DKK8"/>
<dbReference type="OMA" id="YRRRDQE"/>
<dbReference type="OrthoDB" id="5211809at2759"/>
<dbReference type="Proteomes" id="UP000000763">
    <property type="component" value="Chromosome 2"/>
</dbReference>
<dbReference type="Proteomes" id="UP000007752">
    <property type="component" value="Chromosome 2"/>
</dbReference>
<dbReference type="Proteomes" id="UP000059680">
    <property type="component" value="Chromosome 2"/>
</dbReference>
<dbReference type="ExpressionAtlas" id="P0DKK8">
    <property type="expression patterns" value="baseline and differential"/>
</dbReference>
<dbReference type="GO" id="GO:0022627">
    <property type="term" value="C:cytosolic small ribosomal subunit"/>
    <property type="evidence" value="ECO:0000318"/>
    <property type="project" value="GO_Central"/>
</dbReference>
<dbReference type="GO" id="GO:0003723">
    <property type="term" value="F:RNA binding"/>
    <property type="evidence" value="ECO:0000318"/>
    <property type="project" value="GO_Central"/>
</dbReference>
<dbReference type="GO" id="GO:0003735">
    <property type="term" value="F:structural constituent of ribosome"/>
    <property type="evidence" value="ECO:0000318"/>
    <property type="project" value="GO_Central"/>
</dbReference>
<dbReference type="FunFam" id="1.10.10.10:FF:000025">
    <property type="entry name" value="40S ribosomal protein S10"/>
    <property type="match status" value="1"/>
</dbReference>
<dbReference type="Gene3D" id="1.10.10.10">
    <property type="entry name" value="Winged helix-like DNA-binding domain superfamily/Winged helix DNA-binding domain"/>
    <property type="match status" value="1"/>
</dbReference>
<dbReference type="InterPro" id="IPR005326">
    <property type="entry name" value="Plectin_eS10_N"/>
</dbReference>
<dbReference type="InterPro" id="IPR037447">
    <property type="entry name" value="Ribosomal_eS10"/>
</dbReference>
<dbReference type="InterPro" id="IPR036388">
    <property type="entry name" value="WH-like_DNA-bd_sf"/>
</dbReference>
<dbReference type="PANTHER" id="PTHR12146">
    <property type="entry name" value="40S RIBOSOMAL PROTEIN S10"/>
    <property type="match status" value="1"/>
</dbReference>
<dbReference type="PANTHER" id="PTHR12146:SF0">
    <property type="entry name" value="RIBOSOMAL PROTEIN S10"/>
    <property type="match status" value="1"/>
</dbReference>
<dbReference type="Pfam" id="PF03501">
    <property type="entry name" value="S10_plectin"/>
    <property type="match status" value="1"/>
</dbReference>
<protein>
    <recommendedName>
        <fullName evidence="3">Small ribosomal subunit protein eS10z</fullName>
    </recommendedName>
    <alternativeName>
        <fullName>40S ribosomal protein S10-1</fullName>
    </alternativeName>
</protein>
<comment type="subcellular location">
    <subcellularLocation>
        <location evidence="1">Cytoplasm</location>
    </subcellularLocation>
</comment>
<comment type="similarity">
    <text evidence="3">Belongs to the eukaryotic ribosomal protein eS10 family.</text>
</comment>
<feature type="chain" id="PRO_0000436251" description="Small ribosomal subunit protein eS10z">
    <location>
        <begin position="1"/>
        <end position="183"/>
    </location>
</feature>
<feature type="region of interest" description="Disordered" evidence="2">
    <location>
        <begin position="91"/>
        <end position="183"/>
    </location>
</feature>
<feature type="compositionally biased region" description="Basic and acidic residues" evidence="2">
    <location>
        <begin position="109"/>
        <end position="130"/>
    </location>
</feature>
<feature type="compositionally biased region" description="Gly residues" evidence="2">
    <location>
        <begin position="131"/>
        <end position="146"/>
    </location>
</feature>
<feature type="compositionally biased region" description="Gly residues" evidence="2">
    <location>
        <begin position="161"/>
        <end position="175"/>
    </location>
</feature>
<proteinExistence type="evidence at transcript level"/>
<name>RS10A_ORYSJ</name>
<evidence type="ECO:0000250" key="1"/>
<evidence type="ECO:0000256" key="2">
    <source>
        <dbReference type="SAM" id="MobiDB-lite"/>
    </source>
</evidence>
<evidence type="ECO:0000305" key="3"/>
<evidence type="ECO:0000312" key="4">
    <source>
        <dbReference type="EMBL" id="BAD16194.1"/>
    </source>
</evidence>
<evidence type="ECO:0000312" key="5">
    <source>
        <dbReference type="EMBL" id="BAD33256.1"/>
    </source>
</evidence>
<evidence type="ECO:0000312" key="6">
    <source>
        <dbReference type="EMBL" id="BAS79148.1"/>
    </source>
</evidence>
<evidence type="ECO:0000312" key="7">
    <source>
        <dbReference type="EMBL" id="EAZ23393.1"/>
    </source>
</evidence>
<accession>P0DKK8</accession>
<accession>Q4LB27</accession>
<accession>Q6Z105</accession>
<accession>Q9AYP4</accession>
<keyword id="KW-0963">Cytoplasm</keyword>
<keyword id="KW-1185">Reference proteome</keyword>
<keyword id="KW-0687">Ribonucleoprotein</keyword>
<keyword id="KW-0689">Ribosomal protein</keyword>